<reference key="1">
    <citation type="journal article" date="1994" name="J. Biol. Chem.">
        <title>Identification, cloning, and regulation of a novel endothelial cell protein C/activated protein C receptor.</title>
        <authorList>
            <person name="Fukudome K."/>
            <person name="Esmon C.T."/>
        </authorList>
    </citation>
    <scope>NUCLEOTIDE SEQUENCE [MRNA]</scope>
    <source>
        <tissue>Endothelial cell</tissue>
    </source>
</reference>
<reference key="2">
    <citation type="submission" date="1995-06" db="EMBL/GenBank/DDBJ databases">
        <authorList>
            <person name="Flens M.J."/>
            <person name="Scheffer G.L."/>
        </authorList>
    </citation>
    <scope>NUCLEOTIDE SEQUENCE [MRNA]</scope>
</reference>
<reference key="3">
    <citation type="journal article" date="1999" name="Blood">
        <title>Structural and functional implications of the intron/exon organization of the human endothelial cell protein C/activated protein C receptor (EPCR) gene: comparison with the structure of CD1/major histocompatibility complex alpha1 and alpha2 domains.</title>
        <authorList>
            <person name="Simmonds R.E."/>
            <person name="Lane D.A."/>
        </authorList>
    </citation>
    <scope>NUCLEOTIDE SEQUENCE [GENOMIC DNA]</scope>
</reference>
<reference key="4">
    <citation type="journal article" date="1999" name="Gene">
        <title>Organization and chromosomal localization of the human endothelial protein C receptor gene.</title>
        <authorList>
            <person name="Hayashi T."/>
            <person name="Nakamura H."/>
            <person name="Okada A."/>
            <person name="Takebayashi S."/>
            <person name="Wakita T."/>
            <person name="Yuasa H."/>
            <person name="Okumura K."/>
            <person name="Suzuki K."/>
        </authorList>
    </citation>
    <scope>NUCLEOTIDE SEQUENCE [GENOMIC DNA]</scope>
</reference>
<reference key="5">
    <citation type="submission" date="2004-06" db="EMBL/GenBank/DDBJ databases">
        <title>Cloning of human full open reading frames in Gateway(TM) system entry vector (pDONR201).</title>
        <authorList>
            <person name="Ebert L."/>
            <person name="Schick M."/>
            <person name="Neubert P."/>
            <person name="Schatten R."/>
            <person name="Henze S."/>
            <person name="Korn B."/>
        </authorList>
    </citation>
    <scope>NUCLEOTIDE SEQUENCE [LARGE SCALE MRNA]</scope>
</reference>
<reference key="6">
    <citation type="submission" date="2001-06" db="EMBL/GenBank/DDBJ databases">
        <authorList>
            <consortium name="SeattleSNPs variation discovery resource"/>
        </authorList>
    </citation>
    <scope>NUCLEOTIDE SEQUENCE [GENOMIC DNA]</scope>
    <scope>VARIANT GLY-219</scope>
</reference>
<reference key="7">
    <citation type="journal article" date="2004" name="Nat. Genet.">
        <title>Complete sequencing and characterization of 21,243 full-length human cDNAs.</title>
        <authorList>
            <person name="Ota T."/>
            <person name="Suzuki Y."/>
            <person name="Nishikawa T."/>
            <person name="Otsuki T."/>
            <person name="Sugiyama T."/>
            <person name="Irie R."/>
            <person name="Wakamatsu A."/>
            <person name="Hayashi K."/>
            <person name="Sato H."/>
            <person name="Nagai K."/>
            <person name="Kimura K."/>
            <person name="Makita H."/>
            <person name="Sekine M."/>
            <person name="Obayashi M."/>
            <person name="Nishi T."/>
            <person name="Shibahara T."/>
            <person name="Tanaka T."/>
            <person name="Ishii S."/>
            <person name="Yamamoto J."/>
            <person name="Saito K."/>
            <person name="Kawai Y."/>
            <person name="Isono Y."/>
            <person name="Nakamura Y."/>
            <person name="Nagahari K."/>
            <person name="Murakami K."/>
            <person name="Yasuda T."/>
            <person name="Iwayanagi T."/>
            <person name="Wagatsuma M."/>
            <person name="Shiratori A."/>
            <person name="Sudo H."/>
            <person name="Hosoiri T."/>
            <person name="Kaku Y."/>
            <person name="Kodaira H."/>
            <person name="Kondo H."/>
            <person name="Sugawara M."/>
            <person name="Takahashi M."/>
            <person name="Kanda K."/>
            <person name="Yokoi T."/>
            <person name="Furuya T."/>
            <person name="Kikkawa E."/>
            <person name="Omura Y."/>
            <person name="Abe K."/>
            <person name="Kamihara K."/>
            <person name="Katsuta N."/>
            <person name="Sato K."/>
            <person name="Tanikawa M."/>
            <person name="Yamazaki M."/>
            <person name="Ninomiya K."/>
            <person name="Ishibashi T."/>
            <person name="Yamashita H."/>
            <person name="Murakawa K."/>
            <person name="Fujimori K."/>
            <person name="Tanai H."/>
            <person name="Kimata M."/>
            <person name="Watanabe M."/>
            <person name="Hiraoka S."/>
            <person name="Chiba Y."/>
            <person name="Ishida S."/>
            <person name="Ono Y."/>
            <person name="Takiguchi S."/>
            <person name="Watanabe S."/>
            <person name="Yosida M."/>
            <person name="Hotuta T."/>
            <person name="Kusano J."/>
            <person name="Kanehori K."/>
            <person name="Takahashi-Fujii A."/>
            <person name="Hara H."/>
            <person name="Tanase T.-O."/>
            <person name="Nomura Y."/>
            <person name="Togiya S."/>
            <person name="Komai F."/>
            <person name="Hara R."/>
            <person name="Takeuchi K."/>
            <person name="Arita M."/>
            <person name="Imose N."/>
            <person name="Musashino K."/>
            <person name="Yuuki H."/>
            <person name="Oshima A."/>
            <person name="Sasaki N."/>
            <person name="Aotsuka S."/>
            <person name="Yoshikawa Y."/>
            <person name="Matsunawa H."/>
            <person name="Ichihara T."/>
            <person name="Shiohata N."/>
            <person name="Sano S."/>
            <person name="Moriya S."/>
            <person name="Momiyama H."/>
            <person name="Satoh N."/>
            <person name="Takami S."/>
            <person name="Terashima Y."/>
            <person name="Suzuki O."/>
            <person name="Nakagawa S."/>
            <person name="Senoh A."/>
            <person name="Mizoguchi H."/>
            <person name="Goto Y."/>
            <person name="Shimizu F."/>
            <person name="Wakebe H."/>
            <person name="Hishigaki H."/>
            <person name="Watanabe T."/>
            <person name="Sugiyama A."/>
            <person name="Takemoto M."/>
            <person name="Kawakami B."/>
            <person name="Yamazaki M."/>
            <person name="Watanabe K."/>
            <person name="Kumagai A."/>
            <person name="Itakura S."/>
            <person name="Fukuzumi Y."/>
            <person name="Fujimori Y."/>
            <person name="Komiyama M."/>
            <person name="Tashiro H."/>
            <person name="Tanigami A."/>
            <person name="Fujiwara T."/>
            <person name="Ono T."/>
            <person name="Yamada K."/>
            <person name="Fujii Y."/>
            <person name="Ozaki K."/>
            <person name="Hirao M."/>
            <person name="Ohmori Y."/>
            <person name="Kawabata A."/>
            <person name="Hikiji T."/>
            <person name="Kobatake N."/>
            <person name="Inagaki H."/>
            <person name="Ikema Y."/>
            <person name="Okamoto S."/>
            <person name="Okitani R."/>
            <person name="Kawakami T."/>
            <person name="Noguchi S."/>
            <person name="Itoh T."/>
            <person name="Shigeta K."/>
            <person name="Senba T."/>
            <person name="Matsumura K."/>
            <person name="Nakajima Y."/>
            <person name="Mizuno T."/>
            <person name="Morinaga M."/>
            <person name="Sasaki M."/>
            <person name="Togashi T."/>
            <person name="Oyama M."/>
            <person name="Hata H."/>
            <person name="Watanabe M."/>
            <person name="Komatsu T."/>
            <person name="Mizushima-Sugano J."/>
            <person name="Satoh T."/>
            <person name="Shirai Y."/>
            <person name="Takahashi Y."/>
            <person name="Nakagawa K."/>
            <person name="Okumura K."/>
            <person name="Nagase T."/>
            <person name="Nomura N."/>
            <person name="Kikuchi H."/>
            <person name="Masuho Y."/>
            <person name="Yamashita R."/>
            <person name="Nakai K."/>
            <person name="Yada T."/>
            <person name="Nakamura Y."/>
            <person name="Ohara O."/>
            <person name="Isogai T."/>
            <person name="Sugano S."/>
        </authorList>
    </citation>
    <scope>NUCLEOTIDE SEQUENCE [LARGE SCALE MRNA]</scope>
</reference>
<reference key="8">
    <citation type="journal article" date="2001" name="Nature">
        <title>The DNA sequence and comparative analysis of human chromosome 20.</title>
        <authorList>
            <person name="Deloukas P."/>
            <person name="Matthews L.H."/>
            <person name="Ashurst J.L."/>
            <person name="Burton J."/>
            <person name="Gilbert J.G.R."/>
            <person name="Jones M."/>
            <person name="Stavrides G."/>
            <person name="Almeida J.P."/>
            <person name="Babbage A.K."/>
            <person name="Bagguley C.L."/>
            <person name="Bailey J."/>
            <person name="Barlow K.F."/>
            <person name="Bates K.N."/>
            <person name="Beard L.M."/>
            <person name="Beare D.M."/>
            <person name="Beasley O.P."/>
            <person name="Bird C.P."/>
            <person name="Blakey S.E."/>
            <person name="Bridgeman A.M."/>
            <person name="Brown A.J."/>
            <person name="Buck D."/>
            <person name="Burrill W.D."/>
            <person name="Butler A.P."/>
            <person name="Carder C."/>
            <person name="Carter N.P."/>
            <person name="Chapman J.C."/>
            <person name="Clamp M."/>
            <person name="Clark G."/>
            <person name="Clark L.N."/>
            <person name="Clark S.Y."/>
            <person name="Clee C.M."/>
            <person name="Clegg S."/>
            <person name="Cobley V.E."/>
            <person name="Collier R.E."/>
            <person name="Connor R.E."/>
            <person name="Corby N.R."/>
            <person name="Coulson A."/>
            <person name="Coville G.J."/>
            <person name="Deadman R."/>
            <person name="Dhami P.D."/>
            <person name="Dunn M."/>
            <person name="Ellington A.G."/>
            <person name="Frankland J.A."/>
            <person name="Fraser A."/>
            <person name="French L."/>
            <person name="Garner P."/>
            <person name="Grafham D.V."/>
            <person name="Griffiths C."/>
            <person name="Griffiths M.N.D."/>
            <person name="Gwilliam R."/>
            <person name="Hall R.E."/>
            <person name="Hammond S."/>
            <person name="Harley J.L."/>
            <person name="Heath P.D."/>
            <person name="Ho S."/>
            <person name="Holden J.L."/>
            <person name="Howden P.J."/>
            <person name="Huckle E."/>
            <person name="Hunt A.R."/>
            <person name="Hunt S.E."/>
            <person name="Jekosch K."/>
            <person name="Johnson C.M."/>
            <person name="Johnson D."/>
            <person name="Kay M.P."/>
            <person name="Kimberley A.M."/>
            <person name="King A."/>
            <person name="Knights A."/>
            <person name="Laird G.K."/>
            <person name="Lawlor S."/>
            <person name="Lehvaeslaiho M.H."/>
            <person name="Leversha M.A."/>
            <person name="Lloyd C."/>
            <person name="Lloyd D.M."/>
            <person name="Lovell J.D."/>
            <person name="Marsh V.L."/>
            <person name="Martin S.L."/>
            <person name="McConnachie L.J."/>
            <person name="McLay K."/>
            <person name="McMurray A.A."/>
            <person name="Milne S.A."/>
            <person name="Mistry D."/>
            <person name="Moore M.J.F."/>
            <person name="Mullikin J.C."/>
            <person name="Nickerson T."/>
            <person name="Oliver K."/>
            <person name="Parker A."/>
            <person name="Patel R."/>
            <person name="Pearce T.A.V."/>
            <person name="Peck A.I."/>
            <person name="Phillimore B.J.C.T."/>
            <person name="Prathalingam S.R."/>
            <person name="Plumb R.W."/>
            <person name="Ramsay H."/>
            <person name="Rice C.M."/>
            <person name="Ross M.T."/>
            <person name="Scott C.E."/>
            <person name="Sehra H.K."/>
            <person name="Shownkeen R."/>
            <person name="Sims S."/>
            <person name="Skuce C.D."/>
            <person name="Smith M.L."/>
            <person name="Soderlund C."/>
            <person name="Steward C.A."/>
            <person name="Sulston J.E."/>
            <person name="Swann R.M."/>
            <person name="Sycamore N."/>
            <person name="Taylor R."/>
            <person name="Tee L."/>
            <person name="Thomas D.W."/>
            <person name="Thorpe A."/>
            <person name="Tracey A."/>
            <person name="Tromans A.C."/>
            <person name="Vaudin M."/>
            <person name="Wall M."/>
            <person name="Wallis J.M."/>
            <person name="Whitehead S.L."/>
            <person name="Whittaker P."/>
            <person name="Willey D.L."/>
            <person name="Williams L."/>
            <person name="Williams S.A."/>
            <person name="Wilming L."/>
            <person name="Wray P.W."/>
            <person name="Hubbard T."/>
            <person name="Durbin R.M."/>
            <person name="Bentley D.R."/>
            <person name="Beck S."/>
            <person name="Rogers J."/>
        </authorList>
    </citation>
    <scope>NUCLEOTIDE SEQUENCE [LARGE SCALE GENOMIC DNA]</scope>
</reference>
<reference key="9">
    <citation type="submission" date="2005-09" db="EMBL/GenBank/DDBJ databases">
        <authorList>
            <person name="Mural R.J."/>
            <person name="Istrail S."/>
            <person name="Sutton G.G."/>
            <person name="Florea L."/>
            <person name="Halpern A.L."/>
            <person name="Mobarry C.M."/>
            <person name="Lippert R."/>
            <person name="Walenz B."/>
            <person name="Shatkay H."/>
            <person name="Dew I."/>
            <person name="Miller J.R."/>
            <person name="Flanigan M.J."/>
            <person name="Edwards N.J."/>
            <person name="Bolanos R."/>
            <person name="Fasulo D."/>
            <person name="Halldorsson B.V."/>
            <person name="Hannenhalli S."/>
            <person name="Turner R."/>
            <person name="Yooseph S."/>
            <person name="Lu F."/>
            <person name="Nusskern D.R."/>
            <person name="Shue B.C."/>
            <person name="Zheng X.H."/>
            <person name="Zhong F."/>
            <person name="Delcher A.L."/>
            <person name="Huson D.H."/>
            <person name="Kravitz S.A."/>
            <person name="Mouchard L."/>
            <person name="Reinert K."/>
            <person name="Remington K.A."/>
            <person name="Clark A.G."/>
            <person name="Waterman M.S."/>
            <person name="Eichler E.E."/>
            <person name="Adams M.D."/>
            <person name="Hunkapiller M.W."/>
            <person name="Myers E.W."/>
            <person name="Venter J.C."/>
        </authorList>
    </citation>
    <scope>NUCLEOTIDE SEQUENCE [LARGE SCALE GENOMIC DNA]</scope>
</reference>
<reference key="10">
    <citation type="journal article" date="2004" name="Genome Res.">
        <title>The status, quality, and expansion of the NIH full-length cDNA project: the Mammalian Gene Collection (MGC).</title>
        <authorList>
            <consortium name="The MGC Project Team"/>
        </authorList>
    </citation>
    <scope>NUCLEOTIDE SEQUENCE [LARGE SCALE MRNA]</scope>
    <scope>VARIANT GLY-219</scope>
    <source>
        <tissue>Pancreas</tissue>
    </source>
</reference>
<reference key="11">
    <citation type="journal article" date="2000" name="J. Biol. Chem.">
        <title>Metalloproteolytic release of endothelial cell protein C receptor.</title>
        <authorList>
            <person name="Xu J."/>
            <person name="Qu D."/>
            <person name="Esmon N.L."/>
            <person name="Esmon C.T."/>
        </authorList>
    </citation>
    <scope>CHARACTERIZATION OF SOLUBLE FORM</scope>
</reference>
<reference key="12">
    <citation type="journal article" date="2011" name="BMC Syst. Biol.">
        <title>Initial characterization of the human central proteome.</title>
        <authorList>
            <person name="Burkard T.R."/>
            <person name="Planyavsky M."/>
            <person name="Kaupe I."/>
            <person name="Breitwieser F.P."/>
            <person name="Buerckstuemmer T."/>
            <person name="Bennett K.L."/>
            <person name="Superti-Furga G."/>
            <person name="Colinge J."/>
        </authorList>
    </citation>
    <scope>IDENTIFICATION BY MASS SPECTROMETRY [LARGE SCALE ANALYSIS]</scope>
</reference>
<reference key="13">
    <citation type="journal article" date="2015" name="Proteomics">
        <title>N-terminome analysis of the human mitochondrial proteome.</title>
        <authorList>
            <person name="Vaca Jacome A.S."/>
            <person name="Rabilloud T."/>
            <person name="Schaeffer-Reiss C."/>
            <person name="Rompais M."/>
            <person name="Ayoub D."/>
            <person name="Lane L."/>
            <person name="Bairoch A."/>
            <person name="Van Dorsselaer A."/>
            <person name="Carapito C."/>
        </authorList>
    </citation>
    <scope>IDENTIFICATION BY MASS SPECTROMETRY [LARGE SCALE ANALYSIS]</scope>
</reference>
<reference key="14">
    <citation type="journal article" date="2002" name="J. Biol. Chem.">
        <title>The crystal structure of the endothelial protein C receptor and a bound phospholipid.</title>
        <authorList>
            <person name="Oganesyan V."/>
            <person name="Oganesyan N."/>
            <person name="Terzyan S."/>
            <person name="Qu D."/>
            <person name="Dauter Z."/>
            <person name="Esmon N.L."/>
            <person name="Esmon C.T."/>
        </authorList>
    </citation>
    <scope>X-RAY CRYSTALLOGRAPHY (2.0 ANGSTROMS) OF 18-210</scope>
    <scope>GLYCOSYLATION AT ASN-47; ASN-136 AND ASN-172</scope>
    <scope>DISULFIDE BOND</scope>
</reference>
<organism>
    <name type="scientific">Homo sapiens</name>
    <name type="common">Human</name>
    <dbReference type="NCBI Taxonomy" id="9606"/>
    <lineage>
        <taxon>Eukaryota</taxon>
        <taxon>Metazoa</taxon>
        <taxon>Chordata</taxon>
        <taxon>Craniata</taxon>
        <taxon>Vertebrata</taxon>
        <taxon>Euteleostomi</taxon>
        <taxon>Mammalia</taxon>
        <taxon>Eutheria</taxon>
        <taxon>Euarchontoglires</taxon>
        <taxon>Primates</taxon>
        <taxon>Haplorrhini</taxon>
        <taxon>Catarrhini</taxon>
        <taxon>Hominidae</taxon>
        <taxon>Homo</taxon>
    </lineage>
</organism>
<dbReference type="EMBL" id="L35545">
    <property type="protein sequence ID" value="AAA63647.1"/>
    <property type="molecule type" value="mRNA"/>
</dbReference>
<dbReference type="EMBL" id="X89079">
    <property type="protein sequence ID" value="CAA61450.1"/>
    <property type="molecule type" value="mRNA"/>
</dbReference>
<dbReference type="EMBL" id="AF106202">
    <property type="protein sequence ID" value="AAD43967.1"/>
    <property type="molecule type" value="Genomic_DNA"/>
</dbReference>
<dbReference type="EMBL" id="AB026584">
    <property type="protein sequence ID" value="BAA77249.2"/>
    <property type="molecule type" value="Genomic_DNA"/>
</dbReference>
<dbReference type="EMBL" id="CR456948">
    <property type="protein sequence ID" value="CAG33229.1"/>
    <property type="molecule type" value="mRNA"/>
</dbReference>
<dbReference type="EMBL" id="AF375468">
    <property type="protein sequence ID" value="AAK53045.1"/>
    <property type="molecule type" value="Genomic_DNA"/>
</dbReference>
<dbReference type="EMBL" id="AK314887">
    <property type="protein sequence ID" value="BAG37401.1"/>
    <property type="molecule type" value="mRNA"/>
</dbReference>
<dbReference type="EMBL" id="AL356652">
    <property type="status" value="NOT_ANNOTATED_CDS"/>
    <property type="molecule type" value="Genomic_DNA"/>
</dbReference>
<dbReference type="EMBL" id="CH471077">
    <property type="protein sequence ID" value="EAW76224.1"/>
    <property type="molecule type" value="Genomic_DNA"/>
</dbReference>
<dbReference type="EMBL" id="BC014451">
    <property type="protein sequence ID" value="AAH14451.1"/>
    <property type="molecule type" value="mRNA"/>
</dbReference>
<dbReference type="CCDS" id="CCDS13248.1"/>
<dbReference type="PIR" id="A55365">
    <property type="entry name" value="A55365"/>
</dbReference>
<dbReference type="RefSeq" id="NP_006395.2">
    <property type="nucleotide sequence ID" value="NM_006404.4"/>
</dbReference>
<dbReference type="RefSeq" id="XP_047295787.1">
    <property type="nucleotide sequence ID" value="XM_047439831.1"/>
</dbReference>
<dbReference type="PDB" id="1L8J">
    <property type="method" value="X-ray"/>
    <property type="resolution" value="2.00 A"/>
    <property type="chains" value="A=18-210"/>
</dbReference>
<dbReference type="PDB" id="1LQV">
    <property type="method" value="X-ray"/>
    <property type="resolution" value="1.60 A"/>
    <property type="chains" value="A/B=18-210"/>
</dbReference>
<dbReference type="PDB" id="3JTC">
    <property type="method" value="X-ray"/>
    <property type="resolution" value="1.60 A"/>
    <property type="chains" value="A/B=18-210"/>
</dbReference>
<dbReference type="PDB" id="4V3D">
    <property type="method" value="X-ray"/>
    <property type="resolution" value="2.65 A"/>
    <property type="chains" value="B/D=25-194"/>
</dbReference>
<dbReference type="PDB" id="4V3E">
    <property type="method" value="X-ray"/>
    <property type="resolution" value="2.90 A"/>
    <property type="chains" value="B=25-195"/>
</dbReference>
<dbReference type="PDB" id="6SNY">
    <property type="method" value="X-ray"/>
    <property type="resolution" value="3.11 A"/>
    <property type="chains" value="B/C=18-210"/>
</dbReference>
<dbReference type="PDB" id="7OKS">
    <property type="method" value="X-ray"/>
    <property type="resolution" value="1.95 A"/>
    <property type="chains" value="A/B/C/D=18-210"/>
</dbReference>
<dbReference type="PDB" id="7OKT">
    <property type="method" value="X-ray"/>
    <property type="resolution" value="1.95 A"/>
    <property type="chains" value="A/B=18-210"/>
</dbReference>
<dbReference type="PDB" id="7OKU">
    <property type="method" value="X-ray"/>
    <property type="resolution" value="1.95 A"/>
    <property type="chains" value="A=18-210"/>
</dbReference>
<dbReference type="PDB" id="7OKV">
    <property type="method" value="X-ray"/>
    <property type="resolution" value="1.85 A"/>
    <property type="chains" value="A=18-210"/>
</dbReference>
<dbReference type="PDB" id="7Q5D">
    <property type="method" value="X-ray"/>
    <property type="resolution" value="1.80 A"/>
    <property type="chains" value="A=18-210"/>
</dbReference>
<dbReference type="PDB" id="8C44">
    <property type="method" value="EM"/>
    <property type="resolution" value="3.20 A"/>
    <property type="chains" value="C=26-193"/>
</dbReference>
<dbReference type="PDBsum" id="1L8J"/>
<dbReference type="PDBsum" id="1LQV"/>
<dbReference type="PDBsum" id="3JTC"/>
<dbReference type="PDBsum" id="4V3D"/>
<dbReference type="PDBsum" id="4V3E"/>
<dbReference type="PDBsum" id="6SNY"/>
<dbReference type="PDBsum" id="7OKS"/>
<dbReference type="PDBsum" id="7OKT"/>
<dbReference type="PDBsum" id="7OKU"/>
<dbReference type="PDBsum" id="7OKV"/>
<dbReference type="PDBsum" id="7Q5D"/>
<dbReference type="PDBsum" id="8C44"/>
<dbReference type="EMDB" id="EMD-16416"/>
<dbReference type="SMR" id="Q9UNN8"/>
<dbReference type="BioGRID" id="115797">
    <property type="interactions" value="42"/>
</dbReference>
<dbReference type="DIP" id="DIP-48671N"/>
<dbReference type="FunCoup" id="Q9UNN8">
    <property type="interactions" value="305"/>
</dbReference>
<dbReference type="IntAct" id="Q9UNN8">
    <property type="interactions" value="17"/>
</dbReference>
<dbReference type="MINT" id="Q9UNN8"/>
<dbReference type="STRING" id="9606.ENSP00000216968"/>
<dbReference type="DrugBank" id="DB00055">
    <property type="generic name" value="Drotrecogin alfa"/>
</dbReference>
<dbReference type="DrugBank" id="DB04327">
    <property type="generic name" value="Phosphatidylethanolamine"/>
</dbReference>
<dbReference type="DrugBank" id="DB11328">
    <property type="generic name" value="Tetradecyl hydrogen sulfate (ester)"/>
</dbReference>
<dbReference type="GlyConnect" id="1936">
    <property type="glycosylation" value="5 N-Linked glycans (1 site)"/>
</dbReference>
<dbReference type="GlyCosmos" id="Q9UNN8">
    <property type="glycosylation" value="4 sites, 5 glycans"/>
</dbReference>
<dbReference type="GlyGen" id="Q9UNN8">
    <property type="glycosylation" value="6 sites, 13 N-linked glycans (3 sites), 1 O-linked glycan (1 site)"/>
</dbReference>
<dbReference type="iPTMnet" id="Q9UNN8"/>
<dbReference type="PhosphoSitePlus" id="Q9UNN8"/>
<dbReference type="SwissPalm" id="Q9UNN8"/>
<dbReference type="BioMuta" id="PROCR"/>
<dbReference type="DMDM" id="13626550"/>
<dbReference type="CPTAC" id="non-CPTAC-2664"/>
<dbReference type="jPOST" id="Q9UNN8"/>
<dbReference type="MassIVE" id="Q9UNN8"/>
<dbReference type="PaxDb" id="9606-ENSP00000216968"/>
<dbReference type="PeptideAtlas" id="Q9UNN8"/>
<dbReference type="ProteomicsDB" id="85317"/>
<dbReference type="Pumba" id="Q9UNN8"/>
<dbReference type="Antibodypedia" id="11183">
    <property type="antibodies" value="710 antibodies from 39 providers"/>
</dbReference>
<dbReference type="DNASU" id="10544"/>
<dbReference type="Ensembl" id="ENST00000216968.5">
    <property type="protein sequence ID" value="ENSP00000216968.3"/>
    <property type="gene ID" value="ENSG00000101000.6"/>
</dbReference>
<dbReference type="GeneID" id="10544"/>
<dbReference type="KEGG" id="hsa:10544"/>
<dbReference type="MANE-Select" id="ENST00000216968.5">
    <property type="protein sequence ID" value="ENSP00000216968.3"/>
    <property type="RefSeq nucleotide sequence ID" value="NM_006404.5"/>
    <property type="RefSeq protein sequence ID" value="NP_006395.2"/>
</dbReference>
<dbReference type="UCSC" id="uc002xbt.5">
    <property type="organism name" value="human"/>
</dbReference>
<dbReference type="AGR" id="HGNC:9452"/>
<dbReference type="CTD" id="10544"/>
<dbReference type="DisGeNET" id="10544"/>
<dbReference type="GeneCards" id="PROCR"/>
<dbReference type="HGNC" id="HGNC:9452">
    <property type="gene designation" value="PROCR"/>
</dbReference>
<dbReference type="HPA" id="ENSG00000101000">
    <property type="expression patterns" value="Tissue enhanced (adipose)"/>
</dbReference>
<dbReference type="MIM" id="600646">
    <property type="type" value="gene"/>
</dbReference>
<dbReference type="neXtProt" id="NX_Q9UNN8"/>
<dbReference type="OpenTargets" id="ENSG00000101000"/>
<dbReference type="PharmGKB" id="PA33800"/>
<dbReference type="VEuPathDB" id="HostDB:ENSG00000101000"/>
<dbReference type="eggNOG" id="ENOG502S3SK">
    <property type="taxonomic scope" value="Eukaryota"/>
</dbReference>
<dbReference type="GeneTree" id="ENSGT00390000001159"/>
<dbReference type="HOGENOM" id="CLU_1151498_0_0_1"/>
<dbReference type="InParanoid" id="Q9UNN8"/>
<dbReference type="OMA" id="WGNASLD"/>
<dbReference type="OrthoDB" id="9441389at2759"/>
<dbReference type="PAN-GO" id="Q9UNN8">
    <property type="GO annotations" value="2 GO annotations based on evolutionary models"/>
</dbReference>
<dbReference type="PhylomeDB" id="Q9UNN8"/>
<dbReference type="TreeFam" id="TF335868"/>
<dbReference type="PathwayCommons" id="Q9UNN8"/>
<dbReference type="Reactome" id="R-HSA-140875">
    <property type="pathway name" value="Common Pathway of Fibrin Clot Formation"/>
</dbReference>
<dbReference type="Reactome" id="R-HSA-202733">
    <property type="pathway name" value="Cell surface interactions at the vascular wall"/>
</dbReference>
<dbReference type="SignaLink" id="Q9UNN8"/>
<dbReference type="BioGRID-ORCS" id="10544">
    <property type="hits" value="17 hits in 1158 CRISPR screens"/>
</dbReference>
<dbReference type="ChiTaRS" id="PROCR">
    <property type="organism name" value="human"/>
</dbReference>
<dbReference type="EvolutionaryTrace" id="Q9UNN8"/>
<dbReference type="GeneWiki" id="Endothelial_protein_C_receptor"/>
<dbReference type="GenomeRNAi" id="10544"/>
<dbReference type="Pharos" id="Q9UNN8">
    <property type="development level" value="Tbio"/>
</dbReference>
<dbReference type="PRO" id="PR:Q9UNN8"/>
<dbReference type="Proteomes" id="UP000005640">
    <property type="component" value="Chromosome 20"/>
</dbReference>
<dbReference type="RNAct" id="Q9UNN8">
    <property type="molecule type" value="protein"/>
</dbReference>
<dbReference type="Bgee" id="ENSG00000101000">
    <property type="expression patterns" value="Expressed in pericardium and 164 other cell types or tissues"/>
</dbReference>
<dbReference type="ExpressionAtlas" id="Q9UNN8">
    <property type="expression patterns" value="baseline and differential"/>
</dbReference>
<dbReference type="GO" id="GO:0009986">
    <property type="term" value="C:cell surface"/>
    <property type="evidence" value="ECO:0007005"/>
    <property type="project" value="UniProtKB"/>
</dbReference>
<dbReference type="GO" id="GO:0005813">
    <property type="term" value="C:centrosome"/>
    <property type="evidence" value="ECO:0007669"/>
    <property type="project" value="Ensembl"/>
</dbReference>
<dbReference type="GO" id="GO:0070062">
    <property type="term" value="C:extracellular exosome"/>
    <property type="evidence" value="ECO:0007005"/>
    <property type="project" value="UniProtKB"/>
</dbReference>
<dbReference type="GO" id="GO:0005576">
    <property type="term" value="C:extracellular region"/>
    <property type="evidence" value="ECO:0000304"/>
    <property type="project" value="Reactome"/>
</dbReference>
<dbReference type="GO" id="GO:0005615">
    <property type="term" value="C:extracellular space"/>
    <property type="evidence" value="ECO:0000318"/>
    <property type="project" value="GO_Central"/>
</dbReference>
<dbReference type="GO" id="GO:0005925">
    <property type="term" value="C:focal adhesion"/>
    <property type="evidence" value="ECO:0007005"/>
    <property type="project" value="UniProtKB"/>
</dbReference>
<dbReference type="GO" id="GO:0048471">
    <property type="term" value="C:perinuclear region of cytoplasm"/>
    <property type="evidence" value="ECO:0007669"/>
    <property type="project" value="Ensembl"/>
</dbReference>
<dbReference type="GO" id="GO:0005886">
    <property type="term" value="C:plasma membrane"/>
    <property type="evidence" value="ECO:0000304"/>
    <property type="project" value="Reactome"/>
</dbReference>
<dbReference type="GO" id="GO:0038023">
    <property type="term" value="F:signaling receptor activity"/>
    <property type="evidence" value="ECO:0000304"/>
    <property type="project" value="ProtInc"/>
</dbReference>
<dbReference type="GO" id="GO:0007596">
    <property type="term" value="P:blood coagulation"/>
    <property type="evidence" value="ECO:0007669"/>
    <property type="project" value="UniProtKB-KW"/>
</dbReference>
<dbReference type="GO" id="GO:0050819">
    <property type="term" value="P:negative regulation of coagulation"/>
    <property type="evidence" value="ECO:0000315"/>
    <property type="project" value="BHF-UCL"/>
</dbReference>
<dbReference type="FunFam" id="3.30.500.10:FF:000008">
    <property type="entry name" value="Endothelial protein C receptor"/>
    <property type="match status" value="1"/>
</dbReference>
<dbReference type="Gene3D" id="3.30.500.10">
    <property type="entry name" value="MHC class I-like antigen recognition-like"/>
    <property type="match status" value="1"/>
</dbReference>
<dbReference type="InterPro" id="IPR015669">
    <property type="entry name" value="Endothetial_C_recpt"/>
</dbReference>
<dbReference type="InterPro" id="IPR011161">
    <property type="entry name" value="MHC_I-like_Ag-recog"/>
</dbReference>
<dbReference type="InterPro" id="IPR037055">
    <property type="entry name" value="MHC_I-like_Ag-recog_sf"/>
</dbReference>
<dbReference type="InterPro" id="IPR011162">
    <property type="entry name" value="MHC_I/II-like_Ag-recog"/>
</dbReference>
<dbReference type="PANTHER" id="PTHR15349">
    <property type="entry name" value="ENDOTHELIAL PROTEIN C RECEPTOR"/>
    <property type="match status" value="1"/>
</dbReference>
<dbReference type="PANTHER" id="PTHR15349:SF0">
    <property type="entry name" value="ENDOTHELIAL PROTEIN C RECEPTOR"/>
    <property type="match status" value="1"/>
</dbReference>
<dbReference type="Pfam" id="PF16497">
    <property type="entry name" value="MHC_I_3"/>
    <property type="match status" value="1"/>
</dbReference>
<dbReference type="SUPFAM" id="SSF54452">
    <property type="entry name" value="MHC antigen-recognition domain"/>
    <property type="match status" value="1"/>
</dbReference>
<evidence type="ECO:0000255" key="1"/>
<evidence type="ECO:0000269" key="2">
    <source>
    </source>
</evidence>
<evidence type="ECO:0000269" key="3">
    <source>
    </source>
</evidence>
<evidence type="ECO:0000269" key="4">
    <source ref="6"/>
</evidence>
<evidence type="ECO:0000305" key="5"/>
<evidence type="ECO:0007829" key="6">
    <source>
        <dbReference type="PDB" id="1LQV"/>
    </source>
</evidence>
<evidence type="ECO:0007829" key="7">
    <source>
        <dbReference type="PDB" id="6SNY"/>
    </source>
</evidence>
<evidence type="ECO:0007829" key="8">
    <source>
        <dbReference type="PDB" id="7OKS"/>
    </source>
</evidence>
<evidence type="ECO:0007829" key="9">
    <source>
        <dbReference type="PDB" id="7OKU"/>
    </source>
</evidence>
<feature type="signal peptide" evidence="1">
    <location>
        <begin position="1"/>
        <end position="17"/>
    </location>
</feature>
<feature type="chain" id="PRO_0000021191" description="Endothelial protein C receptor">
    <location>
        <begin position="18"/>
        <end position="238"/>
    </location>
</feature>
<feature type="topological domain" description="Extracellular" evidence="1">
    <location>
        <begin position="18"/>
        <end position="210"/>
    </location>
</feature>
<feature type="transmembrane region" description="Helical" evidence="1">
    <location>
        <begin position="211"/>
        <end position="231"/>
    </location>
</feature>
<feature type="topological domain" description="Cytoplasmic" evidence="1">
    <location>
        <begin position="232"/>
        <end position="238"/>
    </location>
</feature>
<feature type="glycosylation site" description="N-linked (GlcNAc...) asparagine" evidence="2">
    <location>
        <position position="47"/>
    </location>
</feature>
<feature type="glycosylation site" description="N-linked (GlcNAc...) asparagine" evidence="1">
    <location>
        <position position="64"/>
    </location>
</feature>
<feature type="glycosylation site" description="N-linked (GlcNAc...) asparagine" evidence="2">
    <location>
        <position position="136"/>
    </location>
</feature>
<feature type="glycosylation site" description="N-linked (GlcNAc...) asparagine" evidence="2">
    <location>
        <position position="172"/>
    </location>
</feature>
<feature type="disulfide bond" evidence="2">
    <location>
        <begin position="118"/>
        <end position="186"/>
    </location>
</feature>
<feature type="sequence variant" id="VAR_012282" description="In dbSNP:rs867186." evidence="3 4">
    <original>S</original>
    <variation>G</variation>
    <location>
        <position position="219"/>
    </location>
</feature>
<feature type="sequence conflict" description="In Ref. 4; BAA77249." evidence="5" ref="4">
    <original>L</original>
    <variation>P</variation>
    <location>
        <position position="6"/>
    </location>
</feature>
<feature type="sequence conflict" description="In Ref. 4; BAA77249." evidence="5" ref="4">
    <original>N</original>
    <variation>A</variation>
    <location>
        <position position="47"/>
    </location>
</feature>
<feature type="strand" evidence="6">
    <location>
        <begin position="26"/>
        <end position="38"/>
    </location>
</feature>
<feature type="strand" evidence="6">
    <location>
        <begin position="41"/>
        <end position="50"/>
    </location>
</feature>
<feature type="strand" evidence="6">
    <location>
        <begin position="53"/>
        <end position="61"/>
    </location>
</feature>
<feature type="helix" evidence="8">
    <location>
        <begin position="62"/>
        <end position="64"/>
    </location>
</feature>
<feature type="strand" evidence="6">
    <location>
        <begin position="66"/>
        <end position="71"/>
    </location>
</feature>
<feature type="helix" evidence="6">
    <location>
        <begin position="76"/>
        <end position="104"/>
    </location>
</feature>
<feature type="strand" evidence="6">
    <location>
        <begin position="108"/>
        <end position="120"/>
    </location>
</feature>
<feature type="strand" evidence="7">
    <location>
        <begin position="122"/>
        <end position="125"/>
    </location>
</feature>
<feature type="strand" evidence="6">
    <location>
        <begin position="128"/>
        <end position="135"/>
    </location>
</feature>
<feature type="strand" evidence="6">
    <location>
        <begin position="138"/>
        <end position="144"/>
    </location>
</feature>
<feature type="turn" evidence="6">
    <location>
        <begin position="145"/>
        <end position="148"/>
    </location>
</feature>
<feature type="strand" evidence="6">
    <location>
        <begin position="149"/>
        <end position="153"/>
    </location>
</feature>
<feature type="strand" evidence="9">
    <location>
        <begin position="154"/>
        <end position="156"/>
    </location>
</feature>
<feature type="helix" evidence="6">
    <location>
        <begin position="159"/>
        <end position="168"/>
    </location>
</feature>
<feature type="turn" evidence="6">
    <location>
        <begin position="172"/>
        <end position="175"/>
    </location>
</feature>
<feature type="helix" evidence="6">
    <location>
        <begin position="176"/>
        <end position="183"/>
    </location>
</feature>
<feature type="helix" evidence="6">
    <location>
        <begin position="185"/>
        <end position="193"/>
    </location>
</feature>
<feature type="helix" evidence="9">
    <location>
        <begin position="194"/>
        <end position="196"/>
    </location>
</feature>
<comment type="function">
    <text>Binds activated protein C. Enhances protein C activation by the thrombin-thrombomodulin complex; plays a role in the protein C pathway controlling blood coagulation.</text>
</comment>
<comment type="interaction">
    <interactant intactId="EBI-719705">
        <id>Q9UNN8</id>
    </interactant>
    <interactant intactId="EBI-2803960">
        <id>P25116</id>
        <label>F2R</label>
    </interactant>
    <organismsDiffer>false</organismsDiffer>
    <experiments>5</experiments>
</comment>
<comment type="subcellular location">
    <subcellularLocation>
        <location>Membrane</location>
        <topology>Single-pass type I membrane protein</topology>
    </subcellularLocation>
</comment>
<comment type="tissue specificity">
    <text>Expressed strongly in the endothelial cells of arteries and veins in heart and lung, less intensely in capillaries in the lung and skin, and not at all in the endothelium of small vessels of the liver and kidney.</text>
</comment>
<comment type="PTM">
    <text evidence="2">N-glycosylated.</text>
</comment>
<comment type="PTM">
    <text>A soluble form exists; probably released by a metalloprotease. Seems to have the same activity as the membrane-bound form.</text>
</comment>
<sequence>MLTTLLPILLLSGWAFCSQDASDGLQRLHMLQISYFRDPYHVWYQGNASLGGHLTHVLEGPDTNTTIIQLQPLQEPESWARTQSGLQSYLLQFHGLVRLVHQERTLAFPLTIRCFLGCELPPEGSRAHVFFEVAVNGSSFVSFRPERALWQADTQVTSGVVTFTLQQLNAYNRTRYELREFLEDTCVQYVQKHISAENTKGSQTSRSYTSLVLGVLVGSFIIAGVAVGIFLCTGGRRC</sequence>
<keyword id="KW-0002">3D-structure</keyword>
<keyword id="KW-0094">Blood coagulation</keyword>
<keyword id="KW-1015">Disulfide bond</keyword>
<keyword id="KW-0325">Glycoprotein</keyword>
<keyword id="KW-0356">Hemostasis</keyword>
<keyword id="KW-0472">Membrane</keyword>
<keyword id="KW-1267">Proteomics identification</keyword>
<keyword id="KW-0675">Receptor</keyword>
<keyword id="KW-1185">Reference proteome</keyword>
<keyword id="KW-0732">Signal</keyword>
<keyword id="KW-0812">Transmembrane</keyword>
<keyword id="KW-1133">Transmembrane helix</keyword>
<accession>Q9UNN8</accession>
<accession>B2RC04</accession>
<accession>Q14218</accession>
<accession>Q6IB56</accession>
<accession>Q96CB3</accession>
<accession>Q9ULX1</accession>
<gene>
    <name type="primary">PROCR</name>
    <name type="synonym">EPCR</name>
</gene>
<name>EPCR_HUMAN</name>
<protein>
    <recommendedName>
        <fullName>Endothelial protein C receptor</fullName>
    </recommendedName>
    <alternativeName>
        <fullName>Activated protein C receptor</fullName>
        <shortName>APC receptor</shortName>
    </alternativeName>
    <alternativeName>
        <fullName>Endothelial cell protein C receptor</fullName>
    </alternativeName>
    <cdAntigenName>CD201</cdAntigenName>
</protein>
<proteinExistence type="evidence at protein level"/>